<keyword id="KW-0961">Cell wall biogenesis/degradation</keyword>
<keyword id="KW-0238">DNA-binding</keyword>
<keyword id="KW-0539">Nucleus</keyword>
<keyword id="KW-1185">Reference proteome</keyword>
<keyword id="KW-0677">Repeat</keyword>
<keyword id="KW-0346">Stress response</keyword>
<keyword id="KW-0804">Transcription</keyword>
<keyword id="KW-0805">Transcription regulation</keyword>
<sequence>MMCSRGHWRPAEDEKLRELVEQFGPHNWNAIAQKLSGRSGKSCRLRWFNQLDPRINRNPFTEEEEERLLASHRIHGNRWSVIARFFPGRTDNAVKNHWHVIMARRGRERSKLRPRGLGHDGTVAATGMIGNYKDCDKERRLATTTAINFPYQFSHINHFQVLKEFLTGKIGFRNSTTPIQEGAIDQTKRPMEFYNFLQVNTDSKIHELIDNSRKDEEEDVDQNNRIPNENCVPFFDFLSVGNSASQGLC</sequence>
<evidence type="ECO:0000255" key="1">
    <source>
        <dbReference type="PROSITE-ProRule" id="PRU00625"/>
    </source>
</evidence>
<evidence type="ECO:0000269" key="2">
    <source>
    </source>
</evidence>
<evidence type="ECO:0000269" key="3">
    <source>
    </source>
</evidence>
<evidence type="ECO:0000269" key="4">
    <source>
    </source>
</evidence>
<evidence type="ECO:0000269" key="5">
    <source>
    </source>
</evidence>
<evidence type="ECO:0000269" key="6">
    <source>
    </source>
</evidence>
<evidence type="ECO:0000269" key="7">
    <source>
    </source>
</evidence>
<evidence type="ECO:0000269" key="8">
    <source>
    </source>
</evidence>
<evidence type="ECO:0000303" key="9">
    <source>
    </source>
</evidence>
<evidence type="ECO:0000303" key="10">
    <source>
    </source>
</evidence>
<evidence type="ECO:0000305" key="11"/>
<evidence type="ECO:0000312" key="12">
    <source>
        <dbReference type="Araport" id="AT1G17950"/>
    </source>
</evidence>
<evidence type="ECO:0000312" key="13">
    <source>
        <dbReference type="EMBL" id="AAF97274.1"/>
    </source>
</evidence>
<comment type="function">
    <text evidence="3 6 8">Transcription factor that confers sensitivity to abscisic acid (ABA) and salt, but tolerance to drought (PubMed:21399993). Regulates secondary cell wall (SCW) biosynthesis, especially in interfascicular and xylary fibers (PubMed:18952777, PubMed:23781226).</text>
</comment>
<comment type="subcellular location">
    <subcellularLocation>
        <location evidence="1 3">Nucleus</location>
    </subcellularLocation>
</comment>
<comment type="tissue specificity">
    <text evidence="3 4 6">Expressed in stamen (PubMed:19325888). Present in roots and siliques, and, at low levels, in leaves and flowers (PubMed:21399993). Expressed in stems, especially in fibers and, at lower levels, in xylems (PubMed:18952777, PubMed:21399993).</text>
</comment>
<comment type="induction">
    <text evidence="2 5 6 7">By abscisic acid (PubMed:16463103, PubMed:21399993). Accumulates in response to salt (PubMed:21399993). Triggered by MYB46 and MYB83 in the regulation of secondary cell wall biosynthesis (PubMed:19674407, PubMed:22197883).</text>
</comment>
<comment type="disruption phenotype">
    <text evidence="3 8">Secondary cell wall (SCW) defects including severe reduction in SCW thickening in both interfascicular fibers and xylary fibers of inflorescence stems (PubMed:18952777). Hyperlignified SCW in interfascicular fibers and xylary fibers (PubMed:23781226).</text>
</comment>
<comment type="caution">
    <text evidence="3 8">Has been reported as both positive and negative regulator of secondary cell wall (SCW) biosynthesis by contradictory mutants phenotypes.</text>
</comment>
<comment type="sequence caution" evidence="11">
    <conflict type="erroneous initiation">
        <sequence resource="EMBL-CDS" id="AAF97274"/>
    </conflict>
    <text>Truncated N-terminus.</text>
</comment>
<organism>
    <name type="scientific">Arabidopsis thaliana</name>
    <name type="common">Mouse-ear cress</name>
    <dbReference type="NCBI Taxonomy" id="3702"/>
    <lineage>
        <taxon>Eukaryota</taxon>
        <taxon>Viridiplantae</taxon>
        <taxon>Streptophyta</taxon>
        <taxon>Embryophyta</taxon>
        <taxon>Tracheophyta</taxon>
        <taxon>Spermatophyta</taxon>
        <taxon>Magnoliopsida</taxon>
        <taxon>eudicotyledons</taxon>
        <taxon>Gunneridae</taxon>
        <taxon>Pentapetalae</taxon>
        <taxon>rosids</taxon>
        <taxon>malvids</taxon>
        <taxon>Brassicales</taxon>
        <taxon>Brassicaceae</taxon>
        <taxon>Camelineae</taxon>
        <taxon>Arabidopsis</taxon>
    </lineage>
</organism>
<gene>
    <name evidence="10" type="primary">MYB52</name>
    <name evidence="9" type="synonym">AHS1</name>
    <name evidence="12" type="ordered locus">At1g17950</name>
    <name evidence="13" type="ORF">F2H15.17</name>
</gene>
<proteinExistence type="evidence at transcript level"/>
<dbReference type="EMBL" id="AF062888">
    <property type="protein sequence ID" value="AAC83610.1"/>
    <property type="molecule type" value="mRNA"/>
</dbReference>
<dbReference type="EMBL" id="AY519554">
    <property type="protein sequence ID" value="AAS10024.1"/>
    <property type="molecule type" value="mRNA"/>
</dbReference>
<dbReference type="EMBL" id="AC034106">
    <property type="protein sequence ID" value="AAF97274.1"/>
    <property type="status" value="ALT_INIT"/>
    <property type="molecule type" value="Genomic_DNA"/>
</dbReference>
<dbReference type="EMBL" id="CP002684">
    <property type="protein sequence ID" value="AEE29655.1"/>
    <property type="molecule type" value="Genomic_DNA"/>
</dbReference>
<dbReference type="EMBL" id="AY086672">
    <property type="protein sequence ID" value="AAM63729.1"/>
    <property type="molecule type" value="mRNA"/>
</dbReference>
<dbReference type="PIR" id="G86314">
    <property type="entry name" value="G86314"/>
</dbReference>
<dbReference type="PIR" id="T51660">
    <property type="entry name" value="T51660"/>
</dbReference>
<dbReference type="RefSeq" id="NP_173237.1">
    <property type="nucleotide sequence ID" value="NM_101658.3"/>
</dbReference>
<dbReference type="SMR" id="Q6R0C4"/>
<dbReference type="IntAct" id="Q6R0C4">
    <property type="interactions" value="14"/>
</dbReference>
<dbReference type="STRING" id="3702.Q6R0C4"/>
<dbReference type="PaxDb" id="3702-AT1G17950.1"/>
<dbReference type="ProteomicsDB" id="251003"/>
<dbReference type="EnsemblPlants" id="AT1G17950.1">
    <property type="protein sequence ID" value="AT1G17950.1"/>
    <property type="gene ID" value="AT1G17950"/>
</dbReference>
<dbReference type="GeneID" id="838374"/>
<dbReference type="Gramene" id="AT1G17950.1">
    <property type="protein sequence ID" value="AT1G17950.1"/>
    <property type="gene ID" value="AT1G17950"/>
</dbReference>
<dbReference type="KEGG" id="ath:AT1G17950"/>
<dbReference type="Araport" id="AT1G17950"/>
<dbReference type="TAIR" id="AT1G17950">
    <property type="gene designation" value="MYB52"/>
</dbReference>
<dbReference type="eggNOG" id="KOG0048">
    <property type="taxonomic scope" value="Eukaryota"/>
</dbReference>
<dbReference type="HOGENOM" id="CLU_028567_18_1_1"/>
<dbReference type="InParanoid" id="Q6R0C4"/>
<dbReference type="OMA" id="TIDINYP"/>
<dbReference type="OrthoDB" id="2143914at2759"/>
<dbReference type="PhylomeDB" id="Q6R0C4"/>
<dbReference type="PRO" id="PR:Q6R0C4"/>
<dbReference type="Proteomes" id="UP000006548">
    <property type="component" value="Chromosome 1"/>
</dbReference>
<dbReference type="ExpressionAtlas" id="Q6R0C4">
    <property type="expression patterns" value="baseline and differential"/>
</dbReference>
<dbReference type="GO" id="GO:0005634">
    <property type="term" value="C:nucleus"/>
    <property type="evidence" value="ECO:0000314"/>
    <property type="project" value="TAIR"/>
</dbReference>
<dbReference type="GO" id="GO:0003700">
    <property type="term" value="F:DNA-binding transcription factor activity"/>
    <property type="evidence" value="ECO:0000250"/>
    <property type="project" value="TAIR"/>
</dbReference>
<dbReference type="GO" id="GO:0000976">
    <property type="term" value="F:transcription cis-regulatory region binding"/>
    <property type="evidence" value="ECO:0000353"/>
    <property type="project" value="TAIR"/>
</dbReference>
<dbReference type="GO" id="GO:0071555">
    <property type="term" value="P:cell wall organization"/>
    <property type="evidence" value="ECO:0007669"/>
    <property type="project" value="UniProtKB-KW"/>
</dbReference>
<dbReference type="GO" id="GO:1901347">
    <property type="term" value="P:negative regulation of secondary cell wall biogenesis"/>
    <property type="evidence" value="ECO:0000315"/>
    <property type="project" value="UniProtKB"/>
</dbReference>
<dbReference type="GO" id="GO:0009834">
    <property type="term" value="P:plant-type secondary cell wall biogenesis"/>
    <property type="evidence" value="ECO:0000315"/>
    <property type="project" value="UniProtKB"/>
</dbReference>
<dbReference type="GO" id="GO:1901348">
    <property type="term" value="P:positive regulation of secondary cell wall biogenesis"/>
    <property type="evidence" value="ECO:0000315"/>
    <property type="project" value="UniProtKB"/>
</dbReference>
<dbReference type="GO" id="GO:2000652">
    <property type="term" value="P:regulation of secondary cell wall biogenesis"/>
    <property type="evidence" value="ECO:0000315"/>
    <property type="project" value="TAIR"/>
</dbReference>
<dbReference type="GO" id="GO:0009737">
    <property type="term" value="P:response to abscisic acid"/>
    <property type="evidence" value="ECO:0000315"/>
    <property type="project" value="UniProtKB"/>
</dbReference>
<dbReference type="GO" id="GO:1902074">
    <property type="term" value="P:response to salt"/>
    <property type="evidence" value="ECO:0000315"/>
    <property type="project" value="UniProtKB"/>
</dbReference>
<dbReference type="GO" id="GO:0009414">
    <property type="term" value="P:response to water deprivation"/>
    <property type="evidence" value="ECO:0000315"/>
    <property type="project" value="UniProtKB"/>
</dbReference>
<dbReference type="CDD" id="cd00167">
    <property type="entry name" value="SANT"/>
    <property type="match status" value="2"/>
</dbReference>
<dbReference type="FunFam" id="1.10.10.60:FF:000060">
    <property type="entry name" value="MYB transcription factor"/>
    <property type="match status" value="1"/>
</dbReference>
<dbReference type="Gene3D" id="1.10.10.60">
    <property type="entry name" value="Homeodomain-like"/>
    <property type="match status" value="2"/>
</dbReference>
<dbReference type="InterPro" id="IPR009057">
    <property type="entry name" value="Homeodomain-like_sf"/>
</dbReference>
<dbReference type="InterPro" id="IPR017930">
    <property type="entry name" value="Myb_dom"/>
</dbReference>
<dbReference type="InterPro" id="IPR050560">
    <property type="entry name" value="MYB_TF"/>
</dbReference>
<dbReference type="InterPro" id="IPR001005">
    <property type="entry name" value="SANT/Myb"/>
</dbReference>
<dbReference type="PANTHER" id="PTHR45614">
    <property type="entry name" value="MYB PROTEIN-RELATED"/>
    <property type="match status" value="1"/>
</dbReference>
<dbReference type="PANTHER" id="PTHR45614:SF256">
    <property type="entry name" value="TRANSCRIPTION FACTOR MYB52"/>
    <property type="match status" value="1"/>
</dbReference>
<dbReference type="Pfam" id="PF13921">
    <property type="entry name" value="Myb_DNA-bind_6"/>
    <property type="match status" value="1"/>
</dbReference>
<dbReference type="SMART" id="SM00717">
    <property type="entry name" value="SANT"/>
    <property type="match status" value="2"/>
</dbReference>
<dbReference type="SUPFAM" id="SSF46689">
    <property type="entry name" value="Homeodomain-like"/>
    <property type="match status" value="1"/>
</dbReference>
<dbReference type="PROSITE" id="PS51294">
    <property type="entry name" value="HTH_MYB"/>
    <property type="match status" value="2"/>
</dbReference>
<protein>
    <recommendedName>
        <fullName evidence="10">Transcription factor MYB52</fullName>
    </recommendedName>
    <alternativeName>
        <fullName evidence="10">Myb-related protein 52</fullName>
        <shortName evidence="10">AtMYB52</shortName>
    </alternativeName>
    <alternativeName>
        <fullName evidence="9">Protein ABA-HYPERSENSITIVE 1</fullName>
    </alternativeName>
</protein>
<accession>Q6R0C4</accession>
<accession>Q8LCC8</accession>
<accession>Q9LMT5</accession>
<accession>Q9ZTD9</accession>
<reference key="1">
    <citation type="journal article" date="1998" name="Plant J.">
        <title>Towards functional characterisation of the members of the R2R3-MYB gene family from Arabidopsis thaliana.</title>
        <authorList>
            <person name="Kranz H.D."/>
            <person name="Denekamp M."/>
            <person name="Greco R."/>
            <person name="Jin H.-L."/>
            <person name="Leyva A."/>
            <person name="Meissner R.C."/>
            <person name="Petroni K."/>
            <person name="Urzainqui A."/>
            <person name="Bevan M."/>
            <person name="Martin C."/>
            <person name="Smeekens S."/>
            <person name="Tonelli C."/>
            <person name="Paz-Ares J."/>
            <person name="Weisshaar B."/>
        </authorList>
    </citation>
    <scope>NUCLEOTIDE SEQUENCE [MRNA]</scope>
    <scope>GENE FAMILY</scope>
    <scope>NOMENCLATURE</scope>
    <source>
        <strain>cv. Columbia</strain>
    </source>
</reference>
<reference key="2">
    <citation type="submission" date="2004-01" db="EMBL/GenBank/DDBJ databases">
        <title>The MYB transcription factor family in Arabidopsis: A genome-wide cloning and expression pattern analysis.</title>
        <authorList>
            <person name="Qu L."/>
            <person name="Gu H."/>
        </authorList>
    </citation>
    <scope>NUCLEOTIDE SEQUENCE [MRNA]</scope>
</reference>
<reference key="3">
    <citation type="journal article" date="2000" name="Nature">
        <title>Sequence and analysis of chromosome 1 of the plant Arabidopsis thaliana.</title>
        <authorList>
            <person name="Theologis A."/>
            <person name="Ecker J.R."/>
            <person name="Palm C.J."/>
            <person name="Federspiel N.A."/>
            <person name="Kaul S."/>
            <person name="White O."/>
            <person name="Alonso J."/>
            <person name="Altafi H."/>
            <person name="Araujo R."/>
            <person name="Bowman C.L."/>
            <person name="Brooks S.Y."/>
            <person name="Buehler E."/>
            <person name="Chan A."/>
            <person name="Chao Q."/>
            <person name="Chen H."/>
            <person name="Cheuk R.F."/>
            <person name="Chin C.W."/>
            <person name="Chung M.K."/>
            <person name="Conn L."/>
            <person name="Conway A.B."/>
            <person name="Conway A.R."/>
            <person name="Creasy T.H."/>
            <person name="Dewar K."/>
            <person name="Dunn P."/>
            <person name="Etgu P."/>
            <person name="Feldblyum T.V."/>
            <person name="Feng J.-D."/>
            <person name="Fong B."/>
            <person name="Fujii C.Y."/>
            <person name="Gill J.E."/>
            <person name="Goldsmith A.D."/>
            <person name="Haas B."/>
            <person name="Hansen N.F."/>
            <person name="Hughes B."/>
            <person name="Huizar L."/>
            <person name="Hunter J.L."/>
            <person name="Jenkins J."/>
            <person name="Johnson-Hopson C."/>
            <person name="Khan S."/>
            <person name="Khaykin E."/>
            <person name="Kim C.J."/>
            <person name="Koo H.L."/>
            <person name="Kremenetskaia I."/>
            <person name="Kurtz D.B."/>
            <person name="Kwan A."/>
            <person name="Lam B."/>
            <person name="Langin-Hooper S."/>
            <person name="Lee A."/>
            <person name="Lee J.M."/>
            <person name="Lenz C.A."/>
            <person name="Li J.H."/>
            <person name="Li Y.-P."/>
            <person name="Lin X."/>
            <person name="Liu S.X."/>
            <person name="Liu Z.A."/>
            <person name="Luros J.S."/>
            <person name="Maiti R."/>
            <person name="Marziali A."/>
            <person name="Militscher J."/>
            <person name="Miranda M."/>
            <person name="Nguyen M."/>
            <person name="Nierman W.C."/>
            <person name="Osborne B.I."/>
            <person name="Pai G."/>
            <person name="Peterson J."/>
            <person name="Pham P.K."/>
            <person name="Rizzo M."/>
            <person name="Rooney T."/>
            <person name="Rowley D."/>
            <person name="Sakano H."/>
            <person name="Salzberg S.L."/>
            <person name="Schwartz J.R."/>
            <person name="Shinn P."/>
            <person name="Southwick A.M."/>
            <person name="Sun H."/>
            <person name="Tallon L.J."/>
            <person name="Tambunga G."/>
            <person name="Toriumi M.J."/>
            <person name="Town C.D."/>
            <person name="Utterback T."/>
            <person name="Van Aken S."/>
            <person name="Vaysberg M."/>
            <person name="Vysotskaia V.S."/>
            <person name="Walker M."/>
            <person name="Wu D."/>
            <person name="Yu G."/>
            <person name="Fraser C.M."/>
            <person name="Venter J.C."/>
            <person name="Davis R.W."/>
        </authorList>
    </citation>
    <scope>NUCLEOTIDE SEQUENCE [LARGE SCALE GENOMIC DNA]</scope>
    <source>
        <strain>cv. Columbia</strain>
    </source>
</reference>
<reference key="4">
    <citation type="journal article" date="2017" name="Plant J.">
        <title>Araport11: a complete reannotation of the Arabidopsis thaliana reference genome.</title>
        <authorList>
            <person name="Cheng C.Y."/>
            <person name="Krishnakumar V."/>
            <person name="Chan A.P."/>
            <person name="Thibaud-Nissen F."/>
            <person name="Schobel S."/>
            <person name="Town C.D."/>
        </authorList>
    </citation>
    <scope>GENOME REANNOTATION</scope>
    <source>
        <strain>cv. Columbia</strain>
    </source>
</reference>
<reference key="5">
    <citation type="submission" date="2002-03" db="EMBL/GenBank/DDBJ databases">
        <title>Full-length cDNA from Arabidopsis thaliana.</title>
        <authorList>
            <person name="Brover V.V."/>
            <person name="Troukhan M.E."/>
            <person name="Alexandrov N.A."/>
            <person name="Lu Y.-P."/>
            <person name="Flavell R.B."/>
            <person name="Feldmann K.A."/>
        </authorList>
    </citation>
    <scope>NUCLEOTIDE SEQUENCE [LARGE SCALE MRNA]</scope>
</reference>
<reference key="6">
    <citation type="journal article" date="1998" name="Plant J.">
        <title>More than 80 R2R3-MYB regulatory genes in the genome of Arabidopsis thaliana.</title>
        <authorList>
            <person name="Romero I."/>
            <person name="Fuertes A."/>
            <person name="Benito M.J."/>
            <person name="Malpica J.M."/>
            <person name="Leyva A."/>
            <person name="Paz-Ares J."/>
        </authorList>
    </citation>
    <scope>GENE FAMILY</scope>
</reference>
<reference key="7">
    <citation type="journal article" date="2006" name="Plant Mol. Biol.">
        <title>The MYB transcription factor superfamily of Arabidopsis: expression analysis and phylogenetic comparison with the rice MYB family.</title>
        <authorList>
            <person name="Chen Y."/>
            <person name="Yang X."/>
            <person name="He K."/>
            <person name="Liu M."/>
            <person name="Li J."/>
            <person name="Gao Z."/>
            <person name="Lin Z."/>
            <person name="Zhang Y."/>
            <person name="Wang X."/>
            <person name="Qiu X."/>
            <person name="Shen Y."/>
            <person name="Zhang L."/>
            <person name="Deng X."/>
            <person name="Luo J."/>
            <person name="Deng X.-W."/>
            <person name="Chen Z."/>
            <person name="Gu H."/>
            <person name="Qu L.-J."/>
        </authorList>
    </citation>
    <scope>INDUCTION BY ABSCISIC ACID</scope>
</reference>
<reference key="8">
    <citation type="journal article" date="2008" name="Plant Cell">
        <title>A battery of transcription factors involved in the regulation of secondary cell wall biosynthesis in Arabidopsis.</title>
        <authorList>
            <person name="Zhong R."/>
            <person name="Lee C."/>
            <person name="Zhou J."/>
            <person name="McCarthy R.L."/>
            <person name="Ye Z.H."/>
        </authorList>
    </citation>
    <scope>FUNCTION</scope>
    <scope>DISRUPTION PHENOTYPE</scope>
    <scope>SUBCELLULAR LOCATION</scope>
    <scope>TISSUE SPECIFICITY</scope>
</reference>
<reference key="9">
    <citation type="journal article" date="2009" name="Plant J.">
        <title>Ectopic expression of MYB46 identifies transcriptional regulatory genes involved in secondary wall biosynthesis in Arabidopsis.</title>
        <authorList>
            <person name="Ko J.H."/>
            <person name="Kim W.C."/>
            <person name="Han K.H."/>
        </authorList>
    </citation>
    <scope>INDUCTION BY MYB46</scope>
</reference>
<reference key="10">
    <citation type="journal article" date="2009" name="PLoS Genet.">
        <title>Gibberellin acts through jasmonate to control the expression of MYB21, MYB24, and MYB57 to promote stamen filament growth in Arabidopsis.</title>
        <authorList>
            <person name="Cheng H."/>
            <person name="Song S."/>
            <person name="Xiao L."/>
            <person name="Soo H.M."/>
            <person name="Cheng Z."/>
            <person name="Xie D."/>
            <person name="Peng J."/>
        </authorList>
    </citation>
    <scope>TISSUE SPECIFICITY</scope>
</reference>
<reference key="11">
    <citation type="journal article" date="2011" name="Mol. Cells">
        <title>Overexpression of AtMYB52 confers ABA hypersensitivity and drought tolerance.</title>
        <authorList>
            <person name="Park M.Y."/>
            <person name="Kang J.-Y."/>
            <person name="Kim S.Y."/>
        </authorList>
    </citation>
    <scope>FUNCTION</scope>
    <scope>TISSUE SPECIFICITY</scope>
    <scope>INDUCTION BY ABSCISIC ACID AND SALT</scope>
    <source>
        <strain>cv. Columbia</strain>
        <strain>cv. Landsberg erecta</strain>
    </source>
</reference>
<reference key="12">
    <citation type="journal article" date="2012" name="Plant Cell Physiol.">
        <title>MYB46 and MYB83 bind to the SMRE sites and directly activate a suite of transcription factors and secondary wall biosynthetic genes.</title>
        <authorList>
            <person name="Zhong R."/>
            <person name="Ye Z.H."/>
        </authorList>
    </citation>
    <scope>INDUCTION BY MYB46 AND MYB83</scope>
</reference>
<reference key="13">
    <citation type="journal article" date="2013" name="Front. Plant Sci.">
        <title>Identification of novel transcription factors regulating secondary cell wall formation in Arabidopsis.</title>
        <authorList>
            <person name="Cassan-Wang H."/>
            <person name="Goue N."/>
            <person name="Saidi M.N."/>
            <person name="Legay S."/>
            <person name="Sivadon P."/>
            <person name="Goffner D."/>
            <person name="Grima-Pettenati J."/>
        </authorList>
    </citation>
    <scope>FUNCTION</scope>
    <scope>DISRUPTION PHENOTYPE</scope>
</reference>
<feature type="chain" id="PRO_0000438733" description="Transcription factor MYB52">
    <location>
        <begin position="1"/>
        <end position="249"/>
    </location>
</feature>
<feature type="domain" description="HTH myb-type 1" evidence="1">
    <location>
        <begin position="1"/>
        <end position="55"/>
    </location>
</feature>
<feature type="domain" description="HTH myb-type 2" evidence="1">
    <location>
        <begin position="56"/>
        <end position="106"/>
    </location>
</feature>
<feature type="DNA-binding region" description="H-T-H motif" evidence="1">
    <location>
        <begin position="28"/>
        <end position="51"/>
    </location>
</feature>
<feature type="DNA-binding region" description="H-T-H motif" evidence="1">
    <location>
        <begin position="79"/>
        <end position="102"/>
    </location>
</feature>
<feature type="sequence conflict" description="In Ref. 1; AAC83610." evidence="11" ref="1">
    <original>S</original>
    <variation>P</variation>
    <location>
        <position position="71"/>
    </location>
</feature>
<feature type="sequence conflict" description="In Ref. 1; AAC83610." evidence="11" ref="1">
    <original>F</original>
    <variation>S</variation>
    <location>
        <position position="165"/>
    </location>
</feature>
<feature type="sequence conflict" description="In Ref. 5; AAM63729." evidence="11" ref="5">
    <original>G</original>
    <variation>V</variation>
    <location>
        <position position="168"/>
    </location>
</feature>
<feature type="sequence conflict" description="In Ref. 1; AAC83610." evidence="11" ref="1">
    <original>P</original>
    <variation>R</variation>
    <location>
        <position position="227"/>
    </location>
</feature>
<name>MYB52_ARATH</name>